<proteinExistence type="inferred from homology"/>
<accession>Q46CU8</accession>
<reference key="1">
    <citation type="journal article" date="2006" name="J. Bacteriol.">
        <title>The Methanosarcina barkeri genome: comparative analysis with Methanosarcina acetivorans and Methanosarcina mazei reveals extensive rearrangement within methanosarcinal genomes.</title>
        <authorList>
            <person name="Maeder D.L."/>
            <person name="Anderson I."/>
            <person name="Brettin T.S."/>
            <person name="Bruce D.C."/>
            <person name="Gilna P."/>
            <person name="Han C.S."/>
            <person name="Lapidus A."/>
            <person name="Metcalf W.W."/>
            <person name="Saunders E."/>
            <person name="Tapia R."/>
            <person name="Sowers K.R."/>
        </authorList>
    </citation>
    <scope>NUCLEOTIDE SEQUENCE [LARGE SCALE GENOMIC DNA]</scope>
    <source>
        <strain>Fusaro / DSM 804</strain>
    </source>
</reference>
<sequence>MRVALKLAYIGTEFHGSQIQPNVETVEGELFKALRNLGIIESPKSANYTCAGRTDAGVHALEQVVAFDTDKLNLAIPRVINSELTPGIWVWAHAEVPLSFDARRDAVSRHYRYVMSGKEYDISKIREASKFLLGTHDFENFSRTNGEKSTVRTIERIDARIDGELIKIDVVGNSFLWNMVRKIVTALSMIGKGVRDTDWLLQMLNPEIYEEGIESAPAYGLTLLKVNYNEKIEWIEDNYSIRRAGDQNQKRILRHRVMAEVLEELISHE</sequence>
<evidence type="ECO:0000255" key="1">
    <source>
        <dbReference type="HAMAP-Rule" id="MF_00171"/>
    </source>
</evidence>
<feature type="chain" id="PRO_1000017111" description="tRNA pseudouridine synthase A">
    <location>
        <begin position="1"/>
        <end position="269"/>
    </location>
</feature>
<feature type="active site" description="Nucleophile" evidence="1">
    <location>
        <position position="55"/>
    </location>
</feature>
<feature type="binding site" evidence="1">
    <location>
        <position position="111"/>
    </location>
    <ligand>
        <name>substrate</name>
    </ligand>
</feature>
<organism>
    <name type="scientific">Methanosarcina barkeri (strain Fusaro / DSM 804)</name>
    <dbReference type="NCBI Taxonomy" id="269797"/>
    <lineage>
        <taxon>Archaea</taxon>
        <taxon>Methanobacteriati</taxon>
        <taxon>Methanobacteriota</taxon>
        <taxon>Stenosarchaea group</taxon>
        <taxon>Methanomicrobia</taxon>
        <taxon>Methanosarcinales</taxon>
        <taxon>Methanosarcinaceae</taxon>
        <taxon>Methanosarcina</taxon>
    </lineage>
</organism>
<dbReference type="EC" id="5.4.99.12" evidence="1"/>
<dbReference type="EMBL" id="CP000099">
    <property type="protein sequence ID" value="AAZ70294.1"/>
    <property type="molecule type" value="Genomic_DNA"/>
</dbReference>
<dbReference type="SMR" id="Q46CU8"/>
<dbReference type="STRING" id="269797.Mbar_A1332"/>
<dbReference type="PaxDb" id="269797-Mbar_A1332"/>
<dbReference type="KEGG" id="mba:Mbar_A1332"/>
<dbReference type="eggNOG" id="arCOG04449">
    <property type="taxonomic scope" value="Archaea"/>
</dbReference>
<dbReference type="HOGENOM" id="CLU_014673_4_2_2"/>
<dbReference type="OrthoDB" id="25720at2157"/>
<dbReference type="GO" id="GO:0003723">
    <property type="term" value="F:RNA binding"/>
    <property type="evidence" value="ECO:0007669"/>
    <property type="project" value="InterPro"/>
</dbReference>
<dbReference type="GO" id="GO:0160147">
    <property type="term" value="F:tRNA pseudouridine(38-40) synthase activity"/>
    <property type="evidence" value="ECO:0007669"/>
    <property type="project" value="UniProtKB-EC"/>
</dbReference>
<dbReference type="GO" id="GO:0031119">
    <property type="term" value="P:tRNA pseudouridine synthesis"/>
    <property type="evidence" value="ECO:0007669"/>
    <property type="project" value="UniProtKB-UniRule"/>
</dbReference>
<dbReference type="CDD" id="cd02866">
    <property type="entry name" value="PseudoU_synth_TruA_Archea"/>
    <property type="match status" value="1"/>
</dbReference>
<dbReference type="FunFam" id="3.30.70.580:FF:000001">
    <property type="entry name" value="tRNA pseudouridine synthase A"/>
    <property type="match status" value="1"/>
</dbReference>
<dbReference type="Gene3D" id="3.30.70.660">
    <property type="entry name" value="Pseudouridine synthase I, catalytic domain, C-terminal subdomain"/>
    <property type="match status" value="1"/>
</dbReference>
<dbReference type="Gene3D" id="3.30.70.580">
    <property type="entry name" value="Pseudouridine synthase I, catalytic domain, N-terminal subdomain"/>
    <property type="match status" value="1"/>
</dbReference>
<dbReference type="HAMAP" id="MF_00171">
    <property type="entry name" value="TruA"/>
    <property type="match status" value="1"/>
</dbReference>
<dbReference type="InterPro" id="IPR020103">
    <property type="entry name" value="PsdUridine_synth_cat_dom_sf"/>
</dbReference>
<dbReference type="InterPro" id="IPR001406">
    <property type="entry name" value="PsdUridine_synth_TruA"/>
</dbReference>
<dbReference type="InterPro" id="IPR020097">
    <property type="entry name" value="PsdUridine_synth_TruA_a/b_dom"/>
</dbReference>
<dbReference type="InterPro" id="IPR020095">
    <property type="entry name" value="PsdUridine_synth_TruA_C"/>
</dbReference>
<dbReference type="InterPro" id="IPR020094">
    <property type="entry name" value="TruA/RsuA/RluB/E/F_N"/>
</dbReference>
<dbReference type="NCBIfam" id="TIGR00071">
    <property type="entry name" value="hisT_truA"/>
    <property type="match status" value="1"/>
</dbReference>
<dbReference type="PANTHER" id="PTHR11142">
    <property type="entry name" value="PSEUDOURIDYLATE SYNTHASE"/>
    <property type="match status" value="1"/>
</dbReference>
<dbReference type="PANTHER" id="PTHR11142:SF0">
    <property type="entry name" value="TRNA PSEUDOURIDINE SYNTHASE-LIKE 1"/>
    <property type="match status" value="1"/>
</dbReference>
<dbReference type="Pfam" id="PF01416">
    <property type="entry name" value="PseudoU_synth_1"/>
    <property type="match status" value="1"/>
</dbReference>
<dbReference type="PIRSF" id="PIRSF001430">
    <property type="entry name" value="tRNA_psdUrid_synth"/>
    <property type="match status" value="1"/>
</dbReference>
<dbReference type="SUPFAM" id="SSF55120">
    <property type="entry name" value="Pseudouridine synthase"/>
    <property type="match status" value="1"/>
</dbReference>
<name>TRUA_METBF</name>
<gene>
    <name evidence="1" type="primary">truA</name>
    <name type="ordered locus">Mbar_A1332</name>
</gene>
<keyword id="KW-0413">Isomerase</keyword>
<keyword id="KW-0819">tRNA processing</keyword>
<comment type="function">
    <text evidence="1">Formation of pseudouridine at positions 38, 39 and 40 in the anticodon stem and loop of transfer RNAs.</text>
</comment>
<comment type="catalytic activity">
    <reaction evidence="1">
        <text>uridine(38/39/40) in tRNA = pseudouridine(38/39/40) in tRNA</text>
        <dbReference type="Rhea" id="RHEA:22376"/>
        <dbReference type="Rhea" id="RHEA-COMP:10085"/>
        <dbReference type="Rhea" id="RHEA-COMP:10087"/>
        <dbReference type="ChEBI" id="CHEBI:65314"/>
        <dbReference type="ChEBI" id="CHEBI:65315"/>
        <dbReference type="EC" id="5.4.99.12"/>
    </reaction>
</comment>
<comment type="similarity">
    <text evidence="1">Belongs to the tRNA pseudouridine synthase TruA family.</text>
</comment>
<protein>
    <recommendedName>
        <fullName evidence="1">tRNA pseudouridine synthase A</fullName>
        <ecNumber evidence="1">5.4.99.12</ecNumber>
    </recommendedName>
    <alternativeName>
        <fullName evidence="1">tRNA pseudouridine(38-40) synthase</fullName>
    </alternativeName>
    <alternativeName>
        <fullName evidence="1">tRNA pseudouridylate synthase I</fullName>
    </alternativeName>
    <alternativeName>
        <fullName evidence="1">tRNA-uridine isomerase I</fullName>
    </alternativeName>
</protein>